<comment type="function">
    <text evidence="1">Together with the chaperonin GroEL, plays an essential role in assisting protein folding. The GroEL-GroES system forms a nano-cage that allows encapsulation of the non-native substrate proteins and provides a physical environment optimized to promote and accelerate protein folding. GroES binds to the apical surface of the GroEL ring, thereby capping the opening of the GroEL channel.</text>
</comment>
<comment type="subunit">
    <text evidence="1">Heptamer of 7 subunits arranged in a ring. Interacts with the chaperonin GroEL.</text>
</comment>
<comment type="subcellular location">
    <subcellularLocation>
        <location evidence="1">Cytoplasm</location>
    </subcellularLocation>
</comment>
<comment type="similarity">
    <text evidence="1">Belongs to the GroES chaperonin family.</text>
</comment>
<dbReference type="EMBL" id="BA000037">
    <property type="protein sequence ID" value="BAC95871.1"/>
    <property type="molecule type" value="Genomic_DNA"/>
</dbReference>
<dbReference type="RefSeq" id="WP_011079244.1">
    <property type="nucleotide sequence ID" value="NC_005139.1"/>
</dbReference>
<dbReference type="SMR" id="Q7M7I6"/>
<dbReference type="STRING" id="672.VV93_v1c28300"/>
<dbReference type="KEGG" id="vvy:VV3107"/>
<dbReference type="eggNOG" id="COG0234">
    <property type="taxonomic scope" value="Bacteria"/>
</dbReference>
<dbReference type="HOGENOM" id="CLU_132825_1_1_6"/>
<dbReference type="Proteomes" id="UP000002675">
    <property type="component" value="Chromosome I"/>
</dbReference>
<dbReference type="GO" id="GO:0005737">
    <property type="term" value="C:cytoplasm"/>
    <property type="evidence" value="ECO:0007669"/>
    <property type="project" value="UniProtKB-SubCell"/>
</dbReference>
<dbReference type="GO" id="GO:0005524">
    <property type="term" value="F:ATP binding"/>
    <property type="evidence" value="ECO:0007669"/>
    <property type="project" value="InterPro"/>
</dbReference>
<dbReference type="GO" id="GO:0046872">
    <property type="term" value="F:metal ion binding"/>
    <property type="evidence" value="ECO:0007669"/>
    <property type="project" value="TreeGrafter"/>
</dbReference>
<dbReference type="GO" id="GO:0044183">
    <property type="term" value="F:protein folding chaperone"/>
    <property type="evidence" value="ECO:0007669"/>
    <property type="project" value="InterPro"/>
</dbReference>
<dbReference type="GO" id="GO:0051087">
    <property type="term" value="F:protein-folding chaperone binding"/>
    <property type="evidence" value="ECO:0007669"/>
    <property type="project" value="TreeGrafter"/>
</dbReference>
<dbReference type="GO" id="GO:0051082">
    <property type="term" value="F:unfolded protein binding"/>
    <property type="evidence" value="ECO:0007669"/>
    <property type="project" value="TreeGrafter"/>
</dbReference>
<dbReference type="GO" id="GO:0051085">
    <property type="term" value="P:chaperone cofactor-dependent protein refolding"/>
    <property type="evidence" value="ECO:0007669"/>
    <property type="project" value="TreeGrafter"/>
</dbReference>
<dbReference type="CDD" id="cd00320">
    <property type="entry name" value="cpn10"/>
    <property type="match status" value="1"/>
</dbReference>
<dbReference type="FunFam" id="2.30.33.40:FF:000001">
    <property type="entry name" value="10 kDa chaperonin"/>
    <property type="match status" value="1"/>
</dbReference>
<dbReference type="Gene3D" id="2.30.33.40">
    <property type="entry name" value="GroES chaperonin"/>
    <property type="match status" value="1"/>
</dbReference>
<dbReference type="HAMAP" id="MF_00580">
    <property type="entry name" value="CH10"/>
    <property type="match status" value="1"/>
</dbReference>
<dbReference type="InterPro" id="IPR020818">
    <property type="entry name" value="Chaperonin_GroES"/>
</dbReference>
<dbReference type="InterPro" id="IPR037124">
    <property type="entry name" value="Chaperonin_GroES_sf"/>
</dbReference>
<dbReference type="InterPro" id="IPR018369">
    <property type="entry name" value="Chaprnonin_Cpn10_CS"/>
</dbReference>
<dbReference type="InterPro" id="IPR011032">
    <property type="entry name" value="GroES-like_sf"/>
</dbReference>
<dbReference type="NCBIfam" id="NF001526">
    <property type="entry name" value="PRK00364.1-1"/>
    <property type="match status" value="1"/>
</dbReference>
<dbReference type="NCBIfam" id="NF001527">
    <property type="entry name" value="PRK00364.1-2"/>
    <property type="match status" value="1"/>
</dbReference>
<dbReference type="NCBIfam" id="NF001531">
    <property type="entry name" value="PRK00364.2-2"/>
    <property type="match status" value="1"/>
</dbReference>
<dbReference type="PANTHER" id="PTHR10772">
    <property type="entry name" value="10 KDA HEAT SHOCK PROTEIN"/>
    <property type="match status" value="1"/>
</dbReference>
<dbReference type="PANTHER" id="PTHR10772:SF58">
    <property type="entry name" value="CO-CHAPERONIN GROES"/>
    <property type="match status" value="1"/>
</dbReference>
<dbReference type="Pfam" id="PF00166">
    <property type="entry name" value="Cpn10"/>
    <property type="match status" value="1"/>
</dbReference>
<dbReference type="PRINTS" id="PR00297">
    <property type="entry name" value="CHAPERONIN10"/>
</dbReference>
<dbReference type="SMART" id="SM00883">
    <property type="entry name" value="Cpn10"/>
    <property type="match status" value="1"/>
</dbReference>
<dbReference type="SUPFAM" id="SSF50129">
    <property type="entry name" value="GroES-like"/>
    <property type="match status" value="1"/>
</dbReference>
<dbReference type="PROSITE" id="PS00681">
    <property type="entry name" value="CHAPERONINS_CPN10"/>
    <property type="match status" value="1"/>
</dbReference>
<accession>Q7M7I6</accession>
<sequence>MNIRPLHDRVIVERQEVESKSAGGIVLTGSAAEKSTRGVVLAVGKGRILENGTVQPLDVKVGDTVIFAESYGTKTEKIDGKEVLIMSENDIMAIVD</sequence>
<name>CH101_VIBVY</name>
<protein>
    <recommendedName>
        <fullName evidence="1">Co-chaperonin GroES 1</fullName>
    </recommendedName>
    <alternativeName>
        <fullName evidence="1">10 kDa chaperonin 1</fullName>
    </alternativeName>
    <alternativeName>
        <fullName evidence="1">Chaperonin-10 1</fullName>
        <shortName evidence="1">Cpn10 1</shortName>
    </alternativeName>
</protein>
<keyword id="KW-0143">Chaperone</keyword>
<keyword id="KW-0963">Cytoplasm</keyword>
<reference key="1">
    <citation type="journal article" date="2003" name="Genome Res.">
        <title>Comparative genome analysis of Vibrio vulnificus, a marine pathogen.</title>
        <authorList>
            <person name="Chen C.-Y."/>
            <person name="Wu K.-M."/>
            <person name="Chang Y.-C."/>
            <person name="Chang C.-H."/>
            <person name="Tsai H.-C."/>
            <person name="Liao T.-L."/>
            <person name="Liu Y.-M."/>
            <person name="Chen H.-J."/>
            <person name="Shen A.B.-T."/>
            <person name="Li J.-C."/>
            <person name="Su T.-L."/>
            <person name="Shao C.-P."/>
            <person name="Lee C.-T."/>
            <person name="Hor L.-I."/>
            <person name="Tsai S.-F."/>
        </authorList>
    </citation>
    <scope>NUCLEOTIDE SEQUENCE [LARGE SCALE GENOMIC DNA]</scope>
    <source>
        <strain>YJ016</strain>
    </source>
</reference>
<proteinExistence type="inferred from homology"/>
<gene>
    <name evidence="1" type="primary">groES1</name>
    <name evidence="1" type="synonym">groS1</name>
    <name type="ordered locus">VV3107</name>
</gene>
<organism>
    <name type="scientific">Vibrio vulnificus (strain YJ016)</name>
    <dbReference type="NCBI Taxonomy" id="196600"/>
    <lineage>
        <taxon>Bacteria</taxon>
        <taxon>Pseudomonadati</taxon>
        <taxon>Pseudomonadota</taxon>
        <taxon>Gammaproteobacteria</taxon>
        <taxon>Vibrionales</taxon>
        <taxon>Vibrionaceae</taxon>
        <taxon>Vibrio</taxon>
    </lineage>
</organism>
<feature type="chain" id="PRO_0000174898" description="Co-chaperonin GroES 1">
    <location>
        <begin position="1"/>
        <end position="96"/>
    </location>
</feature>
<evidence type="ECO:0000255" key="1">
    <source>
        <dbReference type="HAMAP-Rule" id="MF_00580"/>
    </source>
</evidence>